<accession>Q634E2</accession>
<evidence type="ECO:0000255" key="1">
    <source>
        <dbReference type="HAMAP-Rule" id="MF_00127"/>
    </source>
</evidence>
<organism>
    <name type="scientific">Bacillus cereus (strain ZK / E33L)</name>
    <dbReference type="NCBI Taxonomy" id="288681"/>
    <lineage>
        <taxon>Bacteria</taxon>
        <taxon>Bacillati</taxon>
        <taxon>Bacillota</taxon>
        <taxon>Bacilli</taxon>
        <taxon>Bacillales</taxon>
        <taxon>Bacillaceae</taxon>
        <taxon>Bacillus</taxon>
        <taxon>Bacillus cereus group</taxon>
    </lineage>
</organism>
<proteinExistence type="inferred from homology"/>
<sequence>MSIQIPRGTQDILPGTVELWQYIEGQAREICRRYNYKEIRTPIFEHTELFLRGVGDTTDIVQKEMYSFQDRGERSLTLRPEGTAPVVRSYVENKMFGDATQPTKLYYIGQMFRYERPQAGRYRQFVQFGIEAIGSNDPAIDAEVIALAVEFYRGMGLKNIKVVLNSLGDAASRQAHRDALIAHFEPRIGEFCSDCQSRLEKNPLRILDCKKDRNHELMGTAPSITEYLNEDSAVYYDKVQELLTMMDVPFEKDPNLVRGLDYYQHTVFEIMSEAEGFGAITTLSGGGRYNGLVQEIGGPEMPGIGFAMSIERLIMALKAENIELPIEHSIDCYVVALGEKAKDHAAKVAFDLRKAGLAVEKDYLDRKMKAQFKSADRLKAKFVAVLGEDELDKGIINLKDMATGEQEEVALDVFASYVAEKLI</sequence>
<name>SYH2_BACCZ</name>
<dbReference type="EC" id="6.1.1.21" evidence="1"/>
<dbReference type="EMBL" id="CP000001">
    <property type="protein sequence ID" value="AAU16123.1"/>
    <property type="molecule type" value="Genomic_DNA"/>
</dbReference>
<dbReference type="SMR" id="Q634E2"/>
<dbReference type="KEGG" id="bcz:BCE33L4146"/>
<dbReference type="PATRIC" id="fig|288681.22.peg.1237"/>
<dbReference type="Proteomes" id="UP000002612">
    <property type="component" value="Chromosome"/>
</dbReference>
<dbReference type="GO" id="GO:0005737">
    <property type="term" value="C:cytoplasm"/>
    <property type="evidence" value="ECO:0007669"/>
    <property type="project" value="UniProtKB-SubCell"/>
</dbReference>
<dbReference type="GO" id="GO:0005524">
    <property type="term" value="F:ATP binding"/>
    <property type="evidence" value="ECO:0007669"/>
    <property type="project" value="UniProtKB-UniRule"/>
</dbReference>
<dbReference type="GO" id="GO:0140096">
    <property type="term" value="F:catalytic activity, acting on a protein"/>
    <property type="evidence" value="ECO:0007669"/>
    <property type="project" value="UniProtKB-ARBA"/>
</dbReference>
<dbReference type="GO" id="GO:0004821">
    <property type="term" value="F:histidine-tRNA ligase activity"/>
    <property type="evidence" value="ECO:0007669"/>
    <property type="project" value="UniProtKB-UniRule"/>
</dbReference>
<dbReference type="GO" id="GO:0016740">
    <property type="term" value="F:transferase activity"/>
    <property type="evidence" value="ECO:0007669"/>
    <property type="project" value="UniProtKB-ARBA"/>
</dbReference>
<dbReference type="GO" id="GO:0006427">
    <property type="term" value="P:histidyl-tRNA aminoacylation"/>
    <property type="evidence" value="ECO:0007669"/>
    <property type="project" value="UniProtKB-UniRule"/>
</dbReference>
<dbReference type="CDD" id="cd00773">
    <property type="entry name" value="HisRS-like_core"/>
    <property type="match status" value="1"/>
</dbReference>
<dbReference type="CDD" id="cd00859">
    <property type="entry name" value="HisRS_anticodon"/>
    <property type="match status" value="1"/>
</dbReference>
<dbReference type="FunFam" id="3.30.930.10:FF:000005">
    <property type="entry name" value="Histidine--tRNA ligase"/>
    <property type="match status" value="1"/>
</dbReference>
<dbReference type="FunFam" id="3.40.50.800:FF:000013">
    <property type="entry name" value="Histidine--tRNA ligase"/>
    <property type="match status" value="1"/>
</dbReference>
<dbReference type="Gene3D" id="3.40.50.800">
    <property type="entry name" value="Anticodon-binding domain"/>
    <property type="match status" value="1"/>
</dbReference>
<dbReference type="Gene3D" id="3.30.930.10">
    <property type="entry name" value="Bira Bifunctional Protein, Domain 2"/>
    <property type="match status" value="1"/>
</dbReference>
<dbReference type="HAMAP" id="MF_00127">
    <property type="entry name" value="His_tRNA_synth"/>
    <property type="match status" value="1"/>
</dbReference>
<dbReference type="InterPro" id="IPR006195">
    <property type="entry name" value="aa-tRNA-synth_II"/>
</dbReference>
<dbReference type="InterPro" id="IPR045864">
    <property type="entry name" value="aa-tRNA-synth_II/BPL/LPL"/>
</dbReference>
<dbReference type="InterPro" id="IPR004154">
    <property type="entry name" value="Anticodon-bd"/>
</dbReference>
<dbReference type="InterPro" id="IPR036621">
    <property type="entry name" value="Anticodon-bd_dom_sf"/>
</dbReference>
<dbReference type="InterPro" id="IPR015807">
    <property type="entry name" value="His-tRNA-ligase"/>
</dbReference>
<dbReference type="InterPro" id="IPR041715">
    <property type="entry name" value="HisRS-like_core"/>
</dbReference>
<dbReference type="InterPro" id="IPR004516">
    <property type="entry name" value="HisRS/HisZ"/>
</dbReference>
<dbReference type="InterPro" id="IPR033656">
    <property type="entry name" value="HisRS_anticodon"/>
</dbReference>
<dbReference type="NCBIfam" id="TIGR00442">
    <property type="entry name" value="hisS"/>
    <property type="match status" value="1"/>
</dbReference>
<dbReference type="PANTHER" id="PTHR43707:SF1">
    <property type="entry name" value="HISTIDINE--TRNA LIGASE, MITOCHONDRIAL-RELATED"/>
    <property type="match status" value="1"/>
</dbReference>
<dbReference type="PANTHER" id="PTHR43707">
    <property type="entry name" value="HISTIDYL-TRNA SYNTHETASE"/>
    <property type="match status" value="1"/>
</dbReference>
<dbReference type="Pfam" id="PF03129">
    <property type="entry name" value="HGTP_anticodon"/>
    <property type="match status" value="1"/>
</dbReference>
<dbReference type="Pfam" id="PF13393">
    <property type="entry name" value="tRNA-synt_His"/>
    <property type="match status" value="1"/>
</dbReference>
<dbReference type="PIRSF" id="PIRSF001549">
    <property type="entry name" value="His-tRNA_synth"/>
    <property type="match status" value="1"/>
</dbReference>
<dbReference type="SUPFAM" id="SSF52954">
    <property type="entry name" value="Class II aaRS ABD-related"/>
    <property type="match status" value="1"/>
</dbReference>
<dbReference type="SUPFAM" id="SSF55681">
    <property type="entry name" value="Class II aaRS and biotin synthetases"/>
    <property type="match status" value="1"/>
</dbReference>
<dbReference type="PROSITE" id="PS50862">
    <property type="entry name" value="AA_TRNA_LIGASE_II"/>
    <property type="match status" value="1"/>
</dbReference>
<reference key="1">
    <citation type="journal article" date="2006" name="J. Bacteriol.">
        <title>Pathogenomic sequence analysis of Bacillus cereus and Bacillus thuringiensis isolates closely related to Bacillus anthracis.</title>
        <authorList>
            <person name="Han C.S."/>
            <person name="Xie G."/>
            <person name="Challacombe J.F."/>
            <person name="Altherr M.R."/>
            <person name="Bhotika S.S."/>
            <person name="Bruce D."/>
            <person name="Campbell C.S."/>
            <person name="Campbell M.L."/>
            <person name="Chen J."/>
            <person name="Chertkov O."/>
            <person name="Cleland C."/>
            <person name="Dimitrijevic M."/>
            <person name="Doggett N.A."/>
            <person name="Fawcett J.J."/>
            <person name="Glavina T."/>
            <person name="Goodwin L.A."/>
            <person name="Hill K.K."/>
            <person name="Hitchcock P."/>
            <person name="Jackson P.J."/>
            <person name="Keim P."/>
            <person name="Kewalramani A.R."/>
            <person name="Longmire J."/>
            <person name="Lucas S."/>
            <person name="Malfatti S."/>
            <person name="McMurry K."/>
            <person name="Meincke L.J."/>
            <person name="Misra M."/>
            <person name="Moseman B.L."/>
            <person name="Mundt M."/>
            <person name="Munk A.C."/>
            <person name="Okinaka R.T."/>
            <person name="Parson-Quintana B."/>
            <person name="Reilly L.P."/>
            <person name="Richardson P."/>
            <person name="Robinson D.L."/>
            <person name="Rubin E."/>
            <person name="Saunders E."/>
            <person name="Tapia R."/>
            <person name="Tesmer J.G."/>
            <person name="Thayer N."/>
            <person name="Thompson L.S."/>
            <person name="Tice H."/>
            <person name="Ticknor L.O."/>
            <person name="Wills P.L."/>
            <person name="Brettin T.S."/>
            <person name="Gilna P."/>
        </authorList>
    </citation>
    <scope>NUCLEOTIDE SEQUENCE [LARGE SCALE GENOMIC DNA]</scope>
    <source>
        <strain>ZK / E33L</strain>
    </source>
</reference>
<comment type="catalytic activity">
    <reaction evidence="1">
        <text>tRNA(His) + L-histidine + ATP = L-histidyl-tRNA(His) + AMP + diphosphate + H(+)</text>
        <dbReference type="Rhea" id="RHEA:17313"/>
        <dbReference type="Rhea" id="RHEA-COMP:9665"/>
        <dbReference type="Rhea" id="RHEA-COMP:9689"/>
        <dbReference type="ChEBI" id="CHEBI:15378"/>
        <dbReference type="ChEBI" id="CHEBI:30616"/>
        <dbReference type="ChEBI" id="CHEBI:33019"/>
        <dbReference type="ChEBI" id="CHEBI:57595"/>
        <dbReference type="ChEBI" id="CHEBI:78442"/>
        <dbReference type="ChEBI" id="CHEBI:78527"/>
        <dbReference type="ChEBI" id="CHEBI:456215"/>
        <dbReference type="EC" id="6.1.1.21"/>
    </reaction>
</comment>
<comment type="subunit">
    <text evidence="1">Homodimer.</text>
</comment>
<comment type="subcellular location">
    <subcellularLocation>
        <location evidence="1">Cytoplasm</location>
    </subcellularLocation>
</comment>
<comment type="similarity">
    <text evidence="1">Belongs to the class-II aminoacyl-tRNA synthetase family.</text>
</comment>
<keyword id="KW-0030">Aminoacyl-tRNA synthetase</keyword>
<keyword id="KW-0067">ATP-binding</keyword>
<keyword id="KW-0963">Cytoplasm</keyword>
<keyword id="KW-0436">Ligase</keyword>
<keyword id="KW-0547">Nucleotide-binding</keyword>
<keyword id="KW-0648">Protein biosynthesis</keyword>
<gene>
    <name evidence="1" type="primary">hisS2</name>
    <name type="ordered locus">BCE33L4146</name>
</gene>
<protein>
    <recommendedName>
        <fullName evidence="1">Histidine--tRNA ligase 2</fullName>
        <ecNumber evidence="1">6.1.1.21</ecNumber>
    </recommendedName>
    <alternativeName>
        <fullName evidence="1">Histidyl-tRNA synthetase 2</fullName>
        <shortName evidence="1">HisRS 2</shortName>
    </alternativeName>
</protein>
<feature type="chain" id="PRO_0000136100" description="Histidine--tRNA ligase 2">
    <location>
        <begin position="1"/>
        <end position="423"/>
    </location>
</feature>